<name>GABBP_PSEAE</name>
<accession>Q9I6R6</accession>
<feature type="signal peptide" evidence="1">
    <location>
        <begin position="1"/>
        <end position="28"/>
    </location>
</feature>
<feature type="chain" id="PRO_5004327156" description="Gamma-aminobutyric acid-binding protein" evidence="1">
    <location>
        <begin position="29"/>
        <end position="352"/>
    </location>
</feature>
<sequence length="352" mass="38472">MFKSLHQYAHVFSRLSLFGLAFAAAAQAQSQSLTVISFGGATKAAQEQAYFKPFERSGGGQVVAGEYNGEMAKVKAMVDVGKVSWDVVEVESPELLRGCDEGLFERLDPARFGDPAQFVPGTFSECGVATYVWSMVMAYDSTKLARAPQSWADFWNVREFPGKRGLRKGAKYTLEVALLADGVKAEDLYKVLATPEGVSRAFAKLDQLKPNIQWWEAGAQPPQWLAAGDVVMSAAYNGRIAAAQKEGVKLAIVWPGSLYDPEYWAVVKGTPNKALAEKFIAFASQPQTQKVFSEQIPYGPVHKGTLALLPKTVQEALPTAPANLEGARAVDAEFWVDHGEELEQRFNAWAAR</sequence>
<organism>
    <name type="scientific">Pseudomonas aeruginosa (strain ATCC 15692 / DSM 22644 / CIP 104116 / JCM 14847 / LMG 12228 / 1C / PRS 101 / PAO1)</name>
    <dbReference type="NCBI Taxonomy" id="208964"/>
    <lineage>
        <taxon>Bacteria</taxon>
        <taxon>Pseudomonadati</taxon>
        <taxon>Pseudomonadota</taxon>
        <taxon>Gammaproteobacteria</taxon>
        <taxon>Pseudomonadales</taxon>
        <taxon>Pseudomonadaceae</taxon>
        <taxon>Pseudomonas</taxon>
    </lineage>
</organism>
<gene>
    <name evidence="5" type="ordered locus">PA0222</name>
</gene>
<evidence type="ECO:0000255" key="1"/>
<evidence type="ECO:0000269" key="2">
    <source>
    </source>
</evidence>
<evidence type="ECO:0000303" key="3">
    <source>
    </source>
</evidence>
<evidence type="ECO:0000305" key="4"/>
<evidence type="ECO:0000312" key="5">
    <source>
        <dbReference type="EMBL" id="AAG03611.1"/>
    </source>
</evidence>
<comment type="function">
    <text evidence="2">Binds specifically gamma-aminobutyric acid (GABA) with nanomolar affinity. Does not bind structurally related compounds such as 4-aminovaleric acid, spermidine, histamine and butyric acid.</text>
</comment>
<comment type="subcellular location">
    <subcellularLocation>
        <location evidence="4">Periplasm</location>
    </subcellularLocation>
</comment>
<comment type="similarity">
    <text evidence="4">Belongs to the bacterial solute-binding protein 1 family.</text>
</comment>
<keyword id="KW-0574">Periplasm</keyword>
<keyword id="KW-1185">Reference proteome</keyword>
<keyword id="KW-0732">Signal</keyword>
<keyword id="KW-0813">Transport</keyword>
<proteinExistence type="evidence at protein level"/>
<dbReference type="EMBL" id="AE004091">
    <property type="protein sequence ID" value="AAG03611.1"/>
    <property type="molecule type" value="Genomic_DNA"/>
</dbReference>
<dbReference type="PIR" id="F83617">
    <property type="entry name" value="F83617"/>
</dbReference>
<dbReference type="RefSeq" id="NP_248913.1">
    <property type="nucleotide sequence ID" value="NC_002516.2"/>
</dbReference>
<dbReference type="RefSeq" id="WP_003101898.1">
    <property type="nucleotide sequence ID" value="NZ_QZGE01000024.1"/>
</dbReference>
<dbReference type="SMR" id="Q9I6R6"/>
<dbReference type="STRING" id="208964.PA0222"/>
<dbReference type="PaxDb" id="208964-PA0222"/>
<dbReference type="GeneID" id="877806"/>
<dbReference type="KEGG" id="pae:PA0222"/>
<dbReference type="PATRIC" id="fig|208964.12.peg.232"/>
<dbReference type="PseudoCAP" id="PA0222"/>
<dbReference type="HOGENOM" id="CLU_026974_8_0_6"/>
<dbReference type="InParanoid" id="Q9I6R6"/>
<dbReference type="OrthoDB" id="7053620at2"/>
<dbReference type="PhylomeDB" id="Q9I6R6"/>
<dbReference type="BioCyc" id="PAER208964:G1FZ6-224-MONOMER"/>
<dbReference type="Proteomes" id="UP000002438">
    <property type="component" value="Chromosome"/>
</dbReference>
<dbReference type="GO" id="GO:0030288">
    <property type="term" value="C:outer membrane-bounded periplasmic space"/>
    <property type="evidence" value="ECO:0000318"/>
    <property type="project" value="GO_Central"/>
</dbReference>
<dbReference type="GO" id="GO:0030975">
    <property type="term" value="F:thiamine binding"/>
    <property type="evidence" value="ECO:0000318"/>
    <property type="project" value="GO_Central"/>
</dbReference>
<dbReference type="GO" id="GO:0030976">
    <property type="term" value="F:thiamine pyrophosphate binding"/>
    <property type="evidence" value="ECO:0000318"/>
    <property type="project" value="GO_Central"/>
</dbReference>
<dbReference type="GO" id="GO:0015888">
    <property type="term" value="P:thiamine transport"/>
    <property type="evidence" value="ECO:0000318"/>
    <property type="project" value="GO_Central"/>
</dbReference>
<dbReference type="CDD" id="cd13589">
    <property type="entry name" value="PBP2_polyamine_RpCGA009"/>
    <property type="match status" value="1"/>
</dbReference>
<dbReference type="Gene3D" id="3.40.190.10">
    <property type="entry name" value="Periplasmic binding protein-like II"/>
    <property type="match status" value="2"/>
</dbReference>
<dbReference type="InterPro" id="IPR006059">
    <property type="entry name" value="SBP"/>
</dbReference>
<dbReference type="PANTHER" id="PTHR30006:SF3">
    <property type="entry name" value="THIAMINE-BINDING PERIPLASMIC PROTEIN"/>
    <property type="match status" value="1"/>
</dbReference>
<dbReference type="PANTHER" id="PTHR30006">
    <property type="entry name" value="THIAMINE-BINDING PERIPLASMIC PROTEIN-RELATED"/>
    <property type="match status" value="1"/>
</dbReference>
<dbReference type="Pfam" id="PF13416">
    <property type="entry name" value="SBP_bac_8"/>
    <property type="match status" value="1"/>
</dbReference>
<dbReference type="SUPFAM" id="SSF53850">
    <property type="entry name" value="Periplasmic binding protein-like II"/>
    <property type="match status" value="1"/>
</dbReference>
<protein>
    <recommendedName>
        <fullName evidence="4">Gamma-aminobutyric acid-binding protein</fullName>
        <shortName evidence="3">GABA-binding protein</shortName>
    </recommendedName>
</protein>
<reference key="1">
    <citation type="journal article" date="2000" name="Nature">
        <title>Complete genome sequence of Pseudomonas aeruginosa PAO1, an opportunistic pathogen.</title>
        <authorList>
            <person name="Stover C.K."/>
            <person name="Pham X.-Q.T."/>
            <person name="Erwin A.L."/>
            <person name="Mizoguchi S.D."/>
            <person name="Warrener P."/>
            <person name="Hickey M.J."/>
            <person name="Brinkman F.S.L."/>
            <person name="Hufnagle W.O."/>
            <person name="Kowalik D.J."/>
            <person name="Lagrou M."/>
            <person name="Garber R.L."/>
            <person name="Goltry L."/>
            <person name="Tolentino E."/>
            <person name="Westbrock-Wadman S."/>
            <person name="Yuan Y."/>
            <person name="Brody L.L."/>
            <person name="Coulter S.N."/>
            <person name="Folger K.R."/>
            <person name="Kas A."/>
            <person name="Larbig K."/>
            <person name="Lim R.M."/>
            <person name="Smith K.A."/>
            <person name="Spencer D.H."/>
            <person name="Wong G.K.-S."/>
            <person name="Wu Z."/>
            <person name="Paulsen I.T."/>
            <person name="Reizer J."/>
            <person name="Saier M.H. Jr."/>
            <person name="Hancock R.E.W."/>
            <person name="Lory S."/>
            <person name="Olson M.V."/>
        </authorList>
    </citation>
    <scope>NUCLEOTIDE SEQUENCE [LARGE SCALE GENOMIC DNA]</scope>
    <source>
        <strain>ATCC 15692 / DSM 22644 / CIP 104116 / JCM 14847 / LMG 12228 / 1C / PRS 101 / PAO1</strain>
    </source>
</reference>
<reference key="2">
    <citation type="journal article" date="2019" name="Int. J. Mol. Sci.">
        <title>Determination of Ligand Profiles for Pseudomonas aeruginosa Solute Binding Proteins.</title>
        <authorList>
            <person name="Fernandez M."/>
            <person name="Rico-Jimenez M."/>
            <person name="Ortega A."/>
            <person name="Daddaoua A."/>
            <person name="Garcia Garcia A.I."/>
            <person name="Martin-Mora D."/>
            <person name="Torres N.M."/>
            <person name="Tajuelo A."/>
            <person name="Matilla M.A."/>
            <person name="Krell T."/>
        </authorList>
    </citation>
    <scope>FUNCTION AS A BINDING PROTEIN</scope>
    <source>
        <strain>ATCC 15692 / DSM 22644 / CIP 104116 / JCM 14847 / LMG 12228 / 1C / PRS 101 / PAO1</strain>
    </source>
</reference>